<feature type="chain" id="PRO_0000232443" description="Prefoldin subunit beta">
    <location>
        <begin position="1"/>
        <end position="117"/>
    </location>
</feature>
<evidence type="ECO:0000255" key="1">
    <source>
        <dbReference type="HAMAP-Rule" id="MF_00307"/>
    </source>
</evidence>
<keyword id="KW-0143">Chaperone</keyword>
<keyword id="KW-0963">Cytoplasm</keyword>
<comment type="function">
    <text evidence="1">Molecular chaperone capable of stabilizing a range of proteins. Seems to fulfill an ATP-independent, HSP70-like function in archaeal de novo protein folding.</text>
</comment>
<comment type="subunit">
    <text evidence="1">Heterohexamer of two alpha and four beta subunits.</text>
</comment>
<comment type="subcellular location">
    <subcellularLocation>
        <location evidence="1">Cytoplasm</location>
    </subcellularLocation>
</comment>
<comment type="similarity">
    <text evidence="1">Belongs to the prefoldin subunit beta family.</text>
</comment>
<gene>
    <name evidence="1" type="primary">pfdB</name>
    <name type="ordered locus">Mbar_A0213</name>
</gene>
<reference key="1">
    <citation type="journal article" date="2006" name="J. Bacteriol.">
        <title>The Methanosarcina barkeri genome: comparative analysis with Methanosarcina acetivorans and Methanosarcina mazei reveals extensive rearrangement within methanosarcinal genomes.</title>
        <authorList>
            <person name="Maeder D.L."/>
            <person name="Anderson I."/>
            <person name="Brettin T.S."/>
            <person name="Bruce D.C."/>
            <person name="Gilna P."/>
            <person name="Han C.S."/>
            <person name="Lapidus A."/>
            <person name="Metcalf W.W."/>
            <person name="Saunders E."/>
            <person name="Tapia R."/>
            <person name="Sowers K.R."/>
        </authorList>
    </citation>
    <scope>NUCLEOTIDE SEQUENCE [LARGE SCALE GENOMIC DNA]</scope>
    <source>
        <strain>Fusaro / DSM 804</strain>
    </source>
</reference>
<organism>
    <name type="scientific">Methanosarcina barkeri (strain Fusaro / DSM 804)</name>
    <dbReference type="NCBI Taxonomy" id="269797"/>
    <lineage>
        <taxon>Archaea</taxon>
        <taxon>Methanobacteriati</taxon>
        <taxon>Methanobacteriota</taxon>
        <taxon>Stenosarchaea group</taxon>
        <taxon>Methanomicrobia</taxon>
        <taxon>Methanosarcinales</taxon>
        <taxon>Methanosarcinaceae</taxon>
        <taxon>Methanosarcina</taxon>
    </lineage>
</organism>
<sequence length="117" mass="13417">MTAELPPQIQNQIAQLQQIQQQIQALAMQKSQVEAMQKESKMALDELGRLADDAVVYRNVGELVIKTSKEESITKLKDREETLSLRLQSISRQEERLTSRFKQLQEQIQQALGPRAQ</sequence>
<proteinExistence type="inferred from homology"/>
<accession>Q46FZ5</accession>
<dbReference type="EMBL" id="CP000099">
    <property type="protein sequence ID" value="AAZ69197.1"/>
    <property type="molecule type" value="Genomic_DNA"/>
</dbReference>
<dbReference type="SMR" id="Q46FZ5"/>
<dbReference type="STRING" id="269797.Mbar_A0213"/>
<dbReference type="PaxDb" id="269797-Mbar_A0213"/>
<dbReference type="KEGG" id="mba:Mbar_A0213"/>
<dbReference type="eggNOG" id="arCOG01342">
    <property type="taxonomic scope" value="Archaea"/>
</dbReference>
<dbReference type="HOGENOM" id="CLU_131909_2_1_2"/>
<dbReference type="OrthoDB" id="204796at2157"/>
<dbReference type="GO" id="GO:0005737">
    <property type="term" value="C:cytoplasm"/>
    <property type="evidence" value="ECO:0007669"/>
    <property type="project" value="UniProtKB-SubCell"/>
</dbReference>
<dbReference type="GO" id="GO:0016272">
    <property type="term" value="C:prefoldin complex"/>
    <property type="evidence" value="ECO:0007669"/>
    <property type="project" value="UniProtKB-UniRule"/>
</dbReference>
<dbReference type="GO" id="GO:0044183">
    <property type="term" value="F:protein folding chaperone"/>
    <property type="evidence" value="ECO:0007669"/>
    <property type="project" value="TreeGrafter"/>
</dbReference>
<dbReference type="GO" id="GO:0051082">
    <property type="term" value="F:unfolded protein binding"/>
    <property type="evidence" value="ECO:0007669"/>
    <property type="project" value="UniProtKB-UniRule"/>
</dbReference>
<dbReference type="CDD" id="cd23162">
    <property type="entry name" value="Prefoldin_beta_GimC"/>
    <property type="match status" value="1"/>
</dbReference>
<dbReference type="Gene3D" id="1.10.287.370">
    <property type="match status" value="1"/>
</dbReference>
<dbReference type="HAMAP" id="MF_00307">
    <property type="entry name" value="PfdB"/>
    <property type="match status" value="1"/>
</dbReference>
<dbReference type="InterPro" id="IPR002777">
    <property type="entry name" value="PFD_beta-like"/>
</dbReference>
<dbReference type="InterPro" id="IPR012713">
    <property type="entry name" value="PfdB"/>
</dbReference>
<dbReference type="InterPro" id="IPR009053">
    <property type="entry name" value="Prefoldin"/>
</dbReference>
<dbReference type="NCBIfam" id="TIGR02338">
    <property type="entry name" value="gimC_beta"/>
    <property type="match status" value="1"/>
</dbReference>
<dbReference type="PANTHER" id="PTHR20903:SF0">
    <property type="entry name" value="PREFOLDIN SUBUNIT 1"/>
    <property type="match status" value="1"/>
</dbReference>
<dbReference type="PANTHER" id="PTHR20903">
    <property type="entry name" value="PREFOLDIN SUBUNIT 1-RELATED"/>
    <property type="match status" value="1"/>
</dbReference>
<dbReference type="Pfam" id="PF01920">
    <property type="entry name" value="Prefoldin_2"/>
    <property type="match status" value="1"/>
</dbReference>
<dbReference type="SUPFAM" id="SSF46579">
    <property type="entry name" value="Prefoldin"/>
    <property type="match status" value="1"/>
</dbReference>
<name>PFDB_METBF</name>
<protein>
    <recommendedName>
        <fullName evidence="1">Prefoldin subunit beta</fullName>
    </recommendedName>
    <alternativeName>
        <fullName evidence="1">GimC subunit beta</fullName>
    </alternativeName>
</protein>